<gene>
    <name evidence="1" type="primary">recF</name>
    <name type="ordered locus">MGAS2096_Spy1886</name>
</gene>
<name>RECF_STRPB</name>
<protein>
    <recommendedName>
        <fullName evidence="1">DNA replication and repair protein RecF</fullName>
    </recommendedName>
</protein>
<evidence type="ECO:0000255" key="1">
    <source>
        <dbReference type="HAMAP-Rule" id="MF_00365"/>
    </source>
</evidence>
<keyword id="KW-0067">ATP-binding</keyword>
<keyword id="KW-0963">Cytoplasm</keyword>
<keyword id="KW-0227">DNA damage</keyword>
<keyword id="KW-0234">DNA repair</keyword>
<keyword id="KW-0235">DNA replication</keyword>
<keyword id="KW-0238">DNA-binding</keyword>
<keyword id="KW-0547">Nucleotide-binding</keyword>
<keyword id="KW-0742">SOS response</keyword>
<accession>Q1J973</accession>
<reference key="1">
    <citation type="journal article" date="2006" name="Proc. Natl. Acad. Sci. U.S.A.">
        <title>Molecular genetic anatomy of inter- and intraserotype variation in the human bacterial pathogen group A Streptococcus.</title>
        <authorList>
            <person name="Beres S.B."/>
            <person name="Richter E.W."/>
            <person name="Nagiec M.J."/>
            <person name="Sumby P."/>
            <person name="Porcella S.F."/>
            <person name="DeLeo F.R."/>
            <person name="Musser J.M."/>
        </authorList>
    </citation>
    <scope>NUCLEOTIDE SEQUENCE [LARGE SCALE GENOMIC DNA]</scope>
    <source>
        <strain>MGAS2096</strain>
    </source>
</reference>
<sequence>MWIKELELKHYRNYDHLLASFSSGLNVFIGNNAQGKTNFLEAIYFLSLTRSHRTRADKELIHFDHSTVSLTGKIQRISGTVDLEINLSDKGRVTKINALKQAKLSDYIGTMMVVLFAPEDLQLVKGAPSLRRKFIDIDLGQIKPVYLSELSHYNHVLKQRNSYLKSAQQIDAAFLAVLDEQLAGYGARVMEHRIDFINALEKEANTHHQAISNGLESLSLSYQSSVVFDKKTNIYQQFLHQLEKNHQKDFFRKNTSVGPHRDNLAFYINGMNANFASQGQHRSLILSLKMAEVSLMKALTGDNPILLLDDVMSELDNTRQTKLLETVIKENVQTFITTTSLDHLSQLPEGIRIFHVTKGTVQVDSDIH</sequence>
<comment type="function">
    <text evidence="1">The RecF protein is involved in DNA metabolism; it is required for DNA replication and normal SOS inducibility. RecF binds preferentially to single-stranded, linear DNA. It also seems to bind ATP.</text>
</comment>
<comment type="subcellular location">
    <subcellularLocation>
        <location evidence="1">Cytoplasm</location>
    </subcellularLocation>
</comment>
<comment type="similarity">
    <text evidence="1">Belongs to the RecF family.</text>
</comment>
<feature type="chain" id="PRO_1000048584" description="DNA replication and repair protein RecF">
    <location>
        <begin position="1"/>
        <end position="368"/>
    </location>
</feature>
<feature type="binding site" evidence="1">
    <location>
        <begin position="30"/>
        <end position="37"/>
    </location>
    <ligand>
        <name>ATP</name>
        <dbReference type="ChEBI" id="CHEBI:30616"/>
    </ligand>
</feature>
<organism>
    <name type="scientific">Streptococcus pyogenes serotype M12 (strain MGAS2096)</name>
    <dbReference type="NCBI Taxonomy" id="370553"/>
    <lineage>
        <taxon>Bacteria</taxon>
        <taxon>Bacillati</taxon>
        <taxon>Bacillota</taxon>
        <taxon>Bacilli</taxon>
        <taxon>Lactobacillales</taxon>
        <taxon>Streptococcaceae</taxon>
        <taxon>Streptococcus</taxon>
    </lineage>
</organism>
<proteinExistence type="inferred from homology"/>
<dbReference type="EMBL" id="CP000261">
    <property type="protein sequence ID" value="ABF36938.1"/>
    <property type="molecule type" value="Genomic_DNA"/>
</dbReference>
<dbReference type="SMR" id="Q1J973"/>
<dbReference type="KEGG" id="spj:MGAS2096_Spy1886"/>
<dbReference type="HOGENOM" id="CLU_040267_0_1_9"/>
<dbReference type="GO" id="GO:0005737">
    <property type="term" value="C:cytoplasm"/>
    <property type="evidence" value="ECO:0007669"/>
    <property type="project" value="UniProtKB-SubCell"/>
</dbReference>
<dbReference type="GO" id="GO:0005524">
    <property type="term" value="F:ATP binding"/>
    <property type="evidence" value="ECO:0007669"/>
    <property type="project" value="UniProtKB-UniRule"/>
</dbReference>
<dbReference type="GO" id="GO:0003697">
    <property type="term" value="F:single-stranded DNA binding"/>
    <property type="evidence" value="ECO:0007669"/>
    <property type="project" value="UniProtKB-UniRule"/>
</dbReference>
<dbReference type="GO" id="GO:0006260">
    <property type="term" value="P:DNA replication"/>
    <property type="evidence" value="ECO:0007669"/>
    <property type="project" value="UniProtKB-UniRule"/>
</dbReference>
<dbReference type="GO" id="GO:0000731">
    <property type="term" value="P:DNA synthesis involved in DNA repair"/>
    <property type="evidence" value="ECO:0007669"/>
    <property type="project" value="TreeGrafter"/>
</dbReference>
<dbReference type="GO" id="GO:0006302">
    <property type="term" value="P:double-strand break repair"/>
    <property type="evidence" value="ECO:0007669"/>
    <property type="project" value="TreeGrafter"/>
</dbReference>
<dbReference type="GO" id="GO:0009432">
    <property type="term" value="P:SOS response"/>
    <property type="evidence" value="ECO:0007669"/>
    <property type="project" value="UniProtKB-UniRule"/>
</dbReference>
<dbReference type="CDD" id="cd03242">
    <property type="entry name" value="ABC_RecF"/>
    <property type="match status" value="1"/>
</dbReference>
<dbReference type="Gene3D" id="3.40.50.300">
    <property type="entry name" value="P-loop containing nucleotide triphosphate hydrolases"/>
    <property type="match status" value="1"/>
</dbReference>
<dbReference type="Gene3D" id="1.20.1050.90">
    <property type="entry name" value="RecF/RecN/SMC, N-terminal domain"/>
    <property type="match status" value="1"/>
</dbReference>
<dbReference type="HAMAP" id="MF_00365">
    <property type="entry name" value="RecF"/>
    <property type="match status" value="1"/>
</dbReference>
<dbReference type="InterPro" id="IPR001238">
    <property type="entry name" value="DNA-binding_RecF"/>
</dbReference>
<dbReference type="InterPro" id="IPR018078">
    <property type="entry name" value="DNA-binding_RecF_CS"/>
</dbReference>
<dbReference type="InterPro" id="IPR027417">
    <property type="entry name" value="P-loop_NTPase"/>
</dbReference>
<dbReference type="InterPro" id="IPR003395">
    <property type="entry name" value="RecF/RecN/SMC_N"/>
</dbReference>
<dbReference type="InterPro" id="IPR042174">
    <property type="entry name" value="RecF_2"/>
</dbReference>
<dbReference type="NCBIfam" id="TIGR00611">
    <property type="entry name" value="recf"/>
    <property type="match status" value="1"/>
</dbReference>
<dbReference type="PANTHER" id="PTHR32182">
    <property type="entry name" value="DNA REPLICATION AND REPAIR PROTEIN RECF"/>
    <property type="match status" value="1"/>
</dbReference>
<dbReference type="PANTHER" id="PTHR32182:SF0">
    <property type="entry name" value="DNA REPLICATION AND REPAIR PROTEIN RECF"/>
    <property type="match status" value="1"/>
</dbReference>
<dbReference type="Pfam" id="PF02463">
    <property type="entry name" value="SMC_N"/>
    <property type="match status" value="1"/>
</dbReference>
<dbReference type="SUPFAM" id="SSF52540">
    <property type="entry name" value="P-loop containing nucleoside triphosphate hydrolases"/>
    <property type="match status" value="1"/>
</dbReference>
<dbReference type="PROSITE" id="PS00617">
    <property type="entry name" value="RECF_1"/>
    <property type="match status" value="1"/>
</dbReference>
<dbReference type="PROSITE" id="PS00618">
    <property type="entry name" value="RECF_2"/>
    <property type="match status" value="1"/>
</dbReference>